<gene>
    <name evidence="1" type="primary">X</name>
</gene>
<organism>
    <name type="scientific">Woodchuck hepatitis B virus (isolate 2)</name>
    <name type="common">WHV</name>
    <dbReference type="NCBI Taxonomy" id="341946"/>
    <lineage>
        <taxon>Viruses</taxon>
        <taxon>Riboviria</taxon>
        <taxon>Pararnavirae</taxon>
        <taxon>Artverviricota</taxon>
        <taxon>Revtraviricetes</taxon>
        <taxon>Blubervirales</taxon>
        <taxon>Hepadnaviridae</taxon>
        <taxon>Orthohepadnavirus</taxon>
        <taxon>Woodchuck hepatitis virus</taxon>
    </lineage>
</organism>
<accession>P12937</accession>
<dbReference type="EMBL" id="M11082">
    <property type="protein sequence ID" value="AAA19184.1"/>
    <property type="molecule type" value="Unassigned_DNA"/>
</dbReference>
<dbReference type="Proteomes" id="UP000007632">
    <property type="component" value="Genome"/>
</dbReference>
<dbReference type="GO" id="GO:0033650">
    <property type="term" value="C:host cell mitochondrion"/>
    <property type="evidence" value="ECO:0007669"/>
    <property type="project" value="UniProtKB-SubCell"/>
</dbReference>
<dbReference type="GO" id="GO:0042025">
    <property type="term" value="C:host cell nucleus"/>
    <property type="evidence" value="ECO:0007669"/>
    <property type="project" value="UniProtKB-SubCell"/>
</dbReference>
<dbReference type="GO" id="GO:0006351">
    <property type="term" value="P:DNA-templated transcription"/>
    <property type="evidence" value="ECO:0007669"/>
    <property type="project" value="UniProtKB-UniRule"/>
</dbReference>
<dbReference type="GO" id="GO:0085033">
    <property type="term" value="P:symbiont-mediated activation of host NF-kappaB cascade"/>
    <property type="evidence" value="ECO:0007669"/>
    <property type="project" value="UniProtKB-UniRule"/>
</dbReference>
<dbReference type="GO" id="GO:0039592">
    <property type="term" value="P:symbiont-mediated arrest of host cell cycle during G2/M transition"/>
    <property type="evidence" value="ECO:0007669"/>
    <property type="project" value="UniProtKB-UniRule"/>
</dbReference>
<dbReference type="GO" id="GO:0019079">
    <property type="term" value="P:viral genome replication"/>
    <property type="evidence" value="ECO:0007669"/>
    <property type="project" value="UniProtKB-UniRule"/>
</dbReference>
<dbReference type="HAMAP" id="MF_04074">
    <property type="entry name" value="HBV_X"/>
    <property type="match status" value="1"/>
</dbReference>
<dbReference type="InterPro" id="IPR000236">
    <property type="entry name" value="Transactivation_prot_X"/>
</dbReference>
<dbReference type="Pfam" id="PF00739">
    <property type="entry name" value="X"/>
    <property type="match status" value="1"/>
</dbReference>
<evidence type="ECO:0000255" key="1">
    <source>
        <dbReference type="HAMAP-Rule" id="MF_04074"/>
    </source>
</evidence>
<evidence type="ECO:0000256" key="2">
    <source>
        <dbReference type="SAM" id="MobiDB-lite"/>
    </source>
</evidence>
<proteinExistence type="inferred from homology"/>
<organismHost>
    <name type="scientific">Marmota monax</name>
    <name type="common">Woodchuck</name>
    <dbReference type="NCBI Taxonomy" id="9995"/>
</organismHost>
<comment type="function">
    <text evidence="1">Multifunctional protein that plays a role in silencing host antiviral defenses and promoting viral transcription. Does not seem to be essential for HBV infection. May be directly involved in development of cirrhosis and liver cancer (hepatocellular carcinoma). Most of cytosolic activities involve modulation of cytosolic calcium. The effect on apoptosis is controversial depending on the cell types in which the studies have been conducted. May induce apoptosis by localizing in mitochondria and causing loss of mitochondrial membrane potential. May also modulate apoptosis by binding host CFLAR, a key regulator of the death-inducing signaling complex (DISC). Promotes viral transcription by using the host E3 ubiquitin ligase DDB1 to target the SMC5-SMC6 complex to proteasomal degradation. This host complex would otherwise bind to viral episomal DNA, and prevents its transcription. Moderately stimulates transcription of many different viral and cellular transcription elements. Promoters and enhancers stimulated by HBx contain DNA binding sites for NF-kappa-B, AP-1, AP-2, c-EBP, ATF/CREB, or the calcium-activated factor NF-AT.</text>
</comment>
<comment type="subunit">
    <text evidence="1">May form homodimer. May interact with host CEBPA, CFLAR, CREB1, DDB1, E4F1, HBXIP, HSPD1/HSP60, NFKBIA, POLR2E and SMAD4. Interacts with host SMC5-SMC6 complex and induces its degradation. Interacts with host TRPC4AP; leading to prevent ubiquitination of TRPC4AP. Interacts with host PLSCR1; this interaction promotes ubiquitination and degradation of HBx and impairs HBx-mediated cell proliferation.</text>
</comment>
<comment type="subcellular location">
    <subcellularLocation>
        <location evidence="1">Host cytoplasm</location>
    </subcellularLocation>
    <subcellularLocation>
        <location evidence="1">Host nucleus</location>
    </subcellularLocation>
    <subcellularLocation>
        <location evidence="1">Host mitochondrion</location>
    </subcellularLocation>
    <text evidence="1">Mainly cytoplasmic as only a fraction is detected in the nucleus. In cytoplasm, a minor fraction associates with mitochondria or proteasomes.</text>
</comment>
<comment type="PTM">
    <text evidence="1">A fraction may be phosphorylated in insect cells and HepG2 cells, a human hepatoblastoma cell line. Phosphorylated in vitro by host protein kinase C or mitogen-activated protein kinase. N-acetylated in insect cells.</text>
</comment>
<comment type="similarity">
    <text evidence="1">Belongs to the orthohepadnavirus protein X family.</text>
</comment>
<reference key="1">
    <citation type="journal article" date="1985" name="J. Virol.">
        <title>Nucleotide sequence of a cloned woodchuck hepatitis virus genome: evolutional relationship between hepadnaviruses.</title>
        <authorList>
            <person name="Kodama K."/>
            <person name="Ogasawara N."/>
            <person name="Yoshikawa H."/>
            <person name="Murakami S."/>
        </authorList>
    </citation>
    <scope>NUCLEOTIDE SEQUENCE [GENOMIC DNA]</scope>
</reference>
<sequence length="141" mass="15213">MAARLCCHLDSARDVLLLRPFGPQSSGPSFPRPAAGSAASSASSPSPSDDSDLPLGRLPACFASGSGPCCLVFTCADLRTMDSTVNFVSWHANRQLGMPSKDLWTPYIKDQLLTKWEEGSIDPRLSIFLLGGCRHKCMRLL</sequence>
<feature type="chain" id="PRO_0000222372" description="Protein X">
    <location>
        <begin position="1"/>
        <end position="141"/>
    </location>
</feature>
<feature type="region of interest" description="Disordered" evidence="2">
    <location>
        <begin position="25"/>
        <end position="52"/>
    </location>
</feature>
<feature type="region of interest" description="Mitochondrial targeting sequence" evidence="1">
    <location>
        <begin position="68"/>
        <end position="113"/>
    </location>
</feature>
<protein>
    <recommendedName>
        <fullName evidence="1">Protein X</fullName>
    </recommendedName>
    <alternativeName>
        <fullName evidence="1">HBx</fullName>
    </alternativeName>
    <alternativeName>
        <fullName evidence="1">Peptide X</fullName>
    </alternativeName>
    <alternativeName>
        <fullName evidence="1">pX</fullName>
    </alternativeName>
</protein>
<name>X_WHV2</name>
<keyword id="KW-1074">Activation of host NF-kappa-B by virus</keyword>
<keyword id="KW-0010">Activator</keyword>
<keyword id="KW-0053">Apoptosis</keyword>
<keyword id="KW-1035">Host cytoplasm</keyword>
<keyword id="KW-1079">Host G2/M cell cycle arrest by virus</keyword>
<keyword id="KW-1045">Host mitochondrion</keyword>
<keyword id="KW-1048">Host nucleus</keyword>
<keyword id="KW-0945">Host-virus interaction</keyword>
<keyword id="KW-1121">Modulation of host cell cycle by virus</keyword>
<keyword id="KW-0804">Transcription</keyword>
<keyword id="KW-0805">Transcription regulation</keyword>